<sequence length="425" mass="46448">MTHIDWLVQTDPLVAEMVQREVQRQQQHLELIASENFTSPAVMAAQGTVLTNKYAEGLPGKRYYGGCEFVDEVEQLAIDRAKELFGAAHANVQPHSGAQANFAVFLALLNPGDTIMGMDLSHGGHLTHGSPVNVSGKWFNVVHYGVHPETERLDMDQVRDLARQHRPKLIICGYSAYPRVIPFAEFRQIADEVGAYLMADIAHIAGLVASGYHPNPVPLCDVVTTTTHKTLRGPRGGLILTRDEDLGKKLDKAVFPGTQGGPLEHVIAAKAVAFGEALKPEFKAYCGQVIRNAQALAAGLQARQLRLVSGGTDNHLMLIDLRSVNLTGKEADRLMGEIHITTNKNTIPFDPASPFVTSGLRLGTPALTTRGFTEVEFAEVAEIISDRLHAPEDEAIKNRCRERVAALCAQFPLYPHLQFPQPVLA</sequence>
<accession>Q8DH33</accession>
<protein>
    <recommendedName>
        <fullName evidence="1">Serine hydroxymethyltransferase</fullName>
        <shortName evidence="1">SHMT</shortName>
        <shortName evidence="1">Serine methylase</shortName>
        <ecNumber evidence="1">2.1.2.1</ecNumber>
    </recommendedName>
</protein>
<organism>
    <name type="scientific">Thermosynechococcus vestitus (strain NIES-2133 / IAM M-273 / BP-1)</name>
    <dbReference type="NCBI Taxonomy" id="197221"/>
    <lineage>
        <taxon>Bacteria</taxon>
        <taxon>Bacillati</taxon>
        <taxon>Cyanobacteriota</taxon>
        <taxon>Cyanophyceae</taxon>
        <taxon>Acaryochloridales</taxon>
        <taxon>Thermosynechococcaceae</taxon>
        <taxon>Thermosynechococcus</taxon>
    </lineage>
</organism>
<comment type="function">
    <text evidence="1">Catalyzes the reversible interconversion of serine and glycine with tetrahydrofolate (THF) serving as the one-carbon carrier. This reaction serves as the major source of one-carbon groups required for the biosynthesis of purines, thymidylate, methionine, and other important biomolecules. Also exhibits THF-independent aldolase activity toward beta-hydroxyamino acids, producing glycine and aldehydes, via a retro-aldol mechanism.</text>
</comment>
<comment type="catalytic activity">
    <reaction evidence="1">
        <text>(6R)-5,10-methylene-5,6,7,8-tetrahydrofolate + glycine + H2O = (6S)-5,6,7,8-tetrahydrofolate + L-serine</text>
        <dbReference type="Rhea" id="RHEA:15481"/>
        <dbReference type="ChEBI" id="CHEBI:15377"/>
        <dbReference type="ChEBI" id="CHEBI:15636"/>
        <dbReference type="ChEBI" id="CHEBI:33384"/>
        <dbReference type="ChEBI" id="CHEBI:57305"/>
        <dbReference type="ChEBI" id="CHEBI:57453"/>
        <dbReference type="EC" id="2.1.2.1"/>
    </reaction>
</comment>
<comment type="cofactor">
    <cofactor evidence="1">
        <name>pyridoxal 5'-phosphate</name>
        <dbReference type="ChEBI" id="CHEBI:597326"/>
    </cofactor>
</comment>
<comment type="pathway">
    <text evidence="1">One-carbon metabolism; tetrahydrofolate interconversion.</text>
</comment>
<comment type="pathway">
    <text evidence="1">Amino-acid biosynthesis; glycine biosynthesis; glycine from L-serine: step 1/1.</text>
</comment>
<comment type="subunit">
    <text evidence="1">Homodimer.</text>
</comment>
<comment type="subcellular location">
    <subcellularLocation>
        <location evidence="1">Cytoplasm</location>
    </subcellularLocation>
</comment>
<comment type="similarity">
    <text evidence="1">Belongs to the SHMT family.</text>
</comment>
<dbReference type="EC" id="2.1.2.1" evidence="1"/>
<dbReference type="EMBL" id="BA000039">
    <property type="protein sequence ID" value="BAC09679.1"/>
    <property type="molecule type" value="Genomic_DNA"/>
</dbReference>
<dbReference type="RefSeq" id="NP_682917.1">
    <property type="nucleotide sequence ID" value="NC_004113.1"/>
</dbReference>
<dbReference type="RefSeq" id="WP_011057961.1">
    <property type="nucleotide sequence ID" value="NC_004113.1"/>
</dbReference>
<dbReference type="SMR" id="Q8DH33"/>
<dbReference type="STRING" id="197221.gene:10748738"/>
<dbReference type="EnsemblBacteria" id="BAC09679">
    <property type="protein sequence ID" value="BAC09679"/>
    <property type="gene ID" value="BAC09679"/>
</dbReference>
<dbReference type="KEGG" id="tel:tlr2127"/>
<dbReference type="PATRIC" id="fig|197221.4.peg.2227"/>
<dbReference type="eggNOG" id="COG0112">
    <property type="taxonomic scope" value="Bacteria"/>
</dbReference>
<dbReference type="UniPathway" id="UPA00193"/>
<dbReference type="UniPathway" id="UPA00288">
    <property type="reaction ID" value="UER01023"/>
</dbReference>
<dbReference type="Proteomes" id="UP000000440">
    <property type="component" value="Chromosome"/>
</dbReference>
<dbReference type="GO" id="GO:0005829">
    <property type="term" value="C:cytosol"/>
    <property type="evidence" value="ECO:0007669"/>
    <property type="project" value="TreeGrafter"/>
</dbReference>
<dbReference type="GO" id="GO:0004372">
    <property type="term" value="F:glycine hydroxymethyltransferase activity"/>
    <property type="evidence" value="ECO:0007669"/>
    <property type="project" value="UniProtKB-UniRule"/>
</dbReference>
<dbReference type="GO" id="GO:0030170">
    <property type="term" value="F:pyridoxal phosphate binding"/>
    <property type="evidence" value="ECO:0007669"/>
    <property type="project" value="UniProtKB-UniRule"/>
</dbReference>
<dbReference type="GO" id="GO:0019264">
    <property type="term" value="P:glycine biosynthetic process from serine"/>
    <property type="evidence" value="ECO:0007669"/>
    <property type="project" value="UniProtKB-UniRule"/>
</dbReference>
<dbReference type="GO" id="GO:0035999">
    <property type="term" value="P:tetrahydrofolate interconversion"/>
    <property type="evidence" value="ECO:0007669"/>
    <property type="project" value="UniProtKB-UniRule"/>
</dbReference>
<dbReference type="CDD" id="cd00378">
    <property type="entry name" value="SHMT"/>
    <property type="match status" value="1"/>
</dbReference>
<dbReference type="FunFam" id="3.40.640.10:FF:000001">
    <property type="entry name" value="Serine hydroxymethyltransferase"/>
    <property type="match status" value="1"/>
</dbReference>
<dbReference type="FunFam" id="3.90.1150.10:FF:000003">
    <property type="entry name" value="Serine hydroxymethyltransferase"/>
    <property type="match status" value="1"/>
</dbReference>
<dbReference type="Gene3D" id="3.90.1150.10">
    <property type="entry name" value="Aspartate Aminotransferase, domain 1"/>
    <property type="match status" value="1"/>
</dbReference>
<dbReference type="Gene3D" id="3.40.640.10">
    <property type="entry name" value="Type I PLP-dependent aspartate aminotransferase-like (Major domain)"/>
    <property type="match status" value="1"/>
</dbReference>
<dbReference type="HAMAP" id="MF_00051">
    <property type="entry name" value="SHMT"/>
    <property type="match status" value="1"/>
</dbReference>
<dbReference type="InterPro" id="IPR015424">
    <property type="entry name" value="PyrdxlP-dep_Trfase"/>
</dbReference>
<dbReference type="InterPro" id="IPR015421">
    <property type="entry name" value="PyrdxlP-dep_Trfase_major"/>
</dbReference>
<dbReference type="InterPro" id="IPR015422">
    <property type="entry name" value="PyrdxlP-dep_Trfase_small"/>
</dbReference>
<dbReference type="InterPro" id="IPR001085">
    <property type="entry name" value="Ser_HO-MeTrfase"/>
</dbReference>
<dbReference type="InterPro" id="IPR049943">
    <property type="entry name" value="Ser_HO-MeTrfase-like"/>
</dbReference>
<dbReference type="InterPro" id="IPR019798">
    <property type="entry name" value="Ser_HO-MeTrfase_PLP_BS"/>
</dbReference>
<dbReference type="InterPro" id="IPR039429">
    <property type="entry name" value="SHMT-like_dom"/>
</dbReference>
<dbReference type="NCBIfam" id="NF000586">
    <property type="entry name" value="PRK00011.1"/>
    <property type="match status" value="1"/>
</dbReference>
<dbReference type="PANTHER" id="PTHR11680">
    <property type="entry name" value="SERINE HYDROXYMETHYLTRANSFERASE"/>
    <property type="match status" value="1"/>
</dbReference>
<dbReference type="PANTHER" id="PTHR11680:SF35">
    <property type="entry name" value="SERINE HYDROXYMETHYLTRANSFERASE 1"/>
    <property type="match status" value="1"/>
</dbReference>
<dbReference type="Pfam" id="PF00464">
    <property type="entry name" value="SHMT"/>
    <property type="match status" value="1"/>
</dbReference>
<dbReference type="PIRSF" id="PIRSF000412">
    <property type="entry name" value="SHMT"/>
    <property type="match status" value="1"/>
</dbReference>
<dbReference type="SUPFAM" id="SSF53383">
    <property type="entry name" value="PLP-dependent transferases"/>
    <property type="match status" value="1"/>
</dbReference>
<dbReference type="PROSITE" id="PS00096">
    <property type="entry name" value="SHMT"/>
    <property type="match status" value="1"/>
</dbReference>
<evidence type="ECO:0000255" key="1">
    <source>
        <dbReference type="HAMAP-Rule" id="MF_00051"/>
    </source>
</evidence>
<keyword id="KW-0028">Amino-acid biosynthesis</keyword>
<keyword id="KW-0963">Cytoplasm</keyword>
<keyword id="KW-0554">One-carbon metabolism</keyword>
<keyword id="KW-0663">Pyridoxal phosphate</keyword>
<keyword id="KW-1185">Reference proteome</keyword>
<keyword id="KW-0808">Transferase</keyword>
<reference key="1">
    <citation type="journal article" date="2002" name="DNA Res.">
        <title>Complete genome structure of the thermophilic cyanobacterium Thermosynechococcus elongatus BP-1.</title>
        <authorList>
            <person name="Nakamura Y."/>
            <person name="Kaneko T."/>
            <person name="Sato S."/>
            <person name="Ikeuchi M."/>
            <person name="Katoh H."/>
            <person name="Sasamoto S."/>
            <person name="Watanabe A."/>
            <person name="Iriguchi M."/>
            <person name="Kawashima K."/>
            <person name="Kimura T."/>
            <person name="Kishida Y."/>
            <person name="Kiyokawa C."/>
            <person name="Kohara M."/>
            <person name="Matsumoto M."/>
            <person name="Matsuno A."/>
            <person name="Nakazaki N."/>
            <person name="Shimpo S."/>
            <person name="Sugimoto M."/>
            <person name="Takeuchi C."/>
            <person name="Yamada M."/>
            <person name="Tabata S."/>
        </authorList>
    </citation>
    <scope>NUCLEOTIDE SEQUENCE [LARGE SCALE GENOMIC DNA]</scope>
    <source>
        <strain>NIES-2133 / IAM M-273 / BP-1</strain>
    </source>
</reference>
<name>GLYA_THEVB</name>
<gene>
    <name evidence="1" type="primary">glyA</name>
    <name type="ordered locus">tlr2127</name>
</gene>
<proteinExistence type="inferred from homology"/>
<feature type="chain" id="PRO_0000113681" description="Serine hydroxymethyltransferase">
    <location>
        <begin position="1"/>
        <end position="425"/>
    </location>
</feature>
<feature type="binding site" evidence="1">
    <location>
        <position position="120"/>
    </location>
    <ligand>
        <name>(6S)-5,6,7,8-tetrahydrofolate</name>
        <dbReference type="ChEBI" id="CHEBI:57453"/>
    </ligand>
</feature>
<feature type="binding site" evidence="1">
    <location>
        <begin position="124"/>
        <end position="126"/>
    </location>
    <ligand>
        <name>(6S)-5,6,7,8-tetrahydrofolate</name>
        <dbReference type="ChEBI" id="CHEBI:57453"/>
    </ligand>
</feature>
<feature type="binding site" evidence="1">
    <location>
        <begin position="353"/>
        <end position="355"/>
    </location>
    <ligand>
        <name>(6S)-5,6,7,8-tetrahydrofolate</name>
        <dbReference type="ChEBI" id="CHEBI:57453"/>
    </ligand>
</feature>
<feature type="site" description="Plays an important role in substrate specificity" evidence="1">
    <location>
        <position position="228"/>
    </location>
</feature>
<feature type="modified residue" description="N6-(pyridoxal phosphate)lysine" evidence="1">
    <location>
        <position position="229"/>
    </location>
</feature>